<comment type="function">
    <text evidence="1">Formation of pseudouridine at positions 38, 39 and 40 in the anticodon stem and loop of transfer RNAs.</text>
</comment>
<comment type="catalytic activity">
    <reaction evidence="1">
        <text>uridine(38/39/40) in tRNA = pseudouridine(38/39/40) in tRNA</text>
        <dbReference type="Rhea" id="RHEA:22376"/>
        <dbReference type="Rhea" id="RHEA-COMP:10085"/>
        <dbReference type="Rhea" id="RHEA-COMP:10087"/>
        <dbReference type="ChEBI" id="CHEBI:65314"/>
        <dbReference type="ChEBI" id="CHEBI:65315"/>
        <dbReference type="EC" id="5.4.99.12"/>
    </reaction>
</comment>
<comment type="subunit">
    <text evidence="1">Homodimer.</text>
</comment>
<comment type="similarity">
    <text evidence="1">Belongs to the tRNA pseudouridine synthase TruA family.</text>
</comment>
<sequence>MRVLVNISYQGSQFLGFQIQQHGRTIQQQFEKILKRMHKHEVRIHPSSRTDRGVHAIEQYFHFDTELNIPEQQWQYAMNRALPDDIYVNDVSFVNDDFHCRYDCVGKSYRYKIYQSAHKDPFLCGLKTYVPEQLDIEKMNMAAQHFIGTHDFTGFCSQKTEVESKIRTLYESRIEKTESGFDYIVTGSGFLYNMVRVLIAFLIEVGKGKREPQEVPQLLEARDRNQVPFTAPAEGLYLEKIYLTPNELIQDFGNNIKIHQKKSSQNL</sequence>
<organism>
    <name type="scientific">Staphylococcus saprophyticus subsp. saprophyticus (strain ATCC 15305 / DSM 20229 / NCIMB 8711 / NCTC 7292 / S-41)</name>
    <dbReference type="NCBI Taxonomy" id="342451"/>
    <lineage>
        <taxon>Bacteria</taxon>
        <taxon>Bacillati</taxon>
        <taxon>Bacillota</taxon>
        <taxon>Bacilli</taxon>
        <taxon>Bacillales</taxon>
        <taxon>Staphylococcaceae</taxon>
        <taxon>Staphylococcus</taxon>
    </lineage>
</organism>
<feature type="chain" id="PRO_1000017189" description="tRNA pseudouridine synthase A">
    <location>
        <begin position="1"/>
        <end position="267"/>
    </location>
</feature>
<feature type="active site" description="Nucleophile" evidence="1">
    <location>
        <position position="51"/>
    </location>
</feature>
<feature type="binding site" evidence="1">
    <location>
        <position position="109"/>
    </location>
    <ligand>
        <name>substrate</name>
    </ligand>
</feature>
<proteinExistence type="inferred from homology"/>
<name>TRUA_STAS1</name>
<keyword id="KW-0413">Isomerase</keyword>
<keyword id="KW-1185">Reference proteome</keyword>
<keyword id="KW-0819">tRNA processing</keyword>
<dbReference type="EC" id="5.4.99.12" evidence="1"/>
<dbReference type="EMBL" id="AP008934">
    <property type="protein sequence ID" value="BAE17839.1"/>
    <property type="molecule type" value="Genomic_DNA"/>
</dbReference>
<dbReference type="RefSeq" id="WP_011302610.1">
    <property type="nucleotide sequence ID" value="NZ_MTGA01000036.1"/>
</dbReference>
<dbReference type="SMR" id="Q49ZD7"/>
<dbReference type="GeneID" id="66866841"/>
<dbReference type="KEGG" id="ssp:SSP0694"/>
<dbReference type="eggNOG" id="COG0101">
    <property type="taxonomic scope" value="Bacteria"/>
</dbReference>
<dbReference type="HOGENOM" id="CLU_014673_0_1_9"/>
<dbReference type="OrthoDB" id="9811823at2"/>
<dbReference type="Proteomes" id="UP000006371">
    <property type="component" value="Chromosome"/>
</dbReference>
<dbReference type="GO" id="GO:0003723">
    <property type="term" value="F:RNA binding"/>
    <property type="evidence" value="ECO:0007669"/>
    <property type="project" value="InterPro"/>
</dbReference>
<dbReference type="GO" id="GO:0160147">
    <property type="term" value="F:tRNA pseudouridine(38-40) synthase activity"/>
    <property type="evidence" value="ECO:0007669"/>
    <property type="project" value="UniProtKB-EC"/>
</dbReference>
<dbReference type="GO" id="GO:0031119">
    <property type="term" value="P:tRNA pseudouridine synthesis"/>
    <property type="evidence" value="ECO:0007669"/>
    <property type="project" value="UniProtKB-UniRule"/>
</dbReference>
<dbReference type="CDD" id="cd02570">
    <property type="entry name" value="PseudoU_synth_EcTruA"/>
    <property type="match status" value="1"/>
</dbReference>
<dbReference type="FunFam" id="3.30.70.580:FF:000001">
    <property type="entry name" value="tRNA pseudouridine synthase A"/>
    <property type="match status" value="1"/>
</dbReference>
<dbReference type="Gene3D" id="3.30.70.660">
    <property type="entry name" value="Pseudouridine synthase I, catalytic domain, C-terminal subdomain"/>
    <property type="match status" value="1"/>
</dbReference>
<dbReference type="Gene3D" id="3.30.70.580">
    <property type="entry name" value="Pseudouridine synthase I, catalytic domain, N-terminal subdomain"/>
    <property type="match status" value="1"/>
</dbReference>
<dbReference type="HAMAP" id="MF_00171">
    <property type="entry name" value="TruA"/>
    <property type="match status" value="1"/>
</dbReference>
<dbReference type="InterPro" id="IPR020103">
    <property type="entry name" value="PsdUridine_synth_cat_dom_sf"/>
</dbReference>
<dbReference type="InterPro" id="IPR001406">
    <property type="entry name" value="PsdUridine_synth_TruA"/>
</dbReference>
<dbReference type="InterPro" id="IPR020097">
    <property type="entry name" value="PsdUridine_synth_TruA_a/b_dom"/>
</dbReference>
<dbReference type="InterPro" id="IPR020095">
    <property type="entry name" value="PsdUridine_synth_TruA_C"/>
</dbReference>
<dbReference type="InterPro" id="IPR020094">
    <property type="entry name" value="TruA/RsuA/RluB/E/F_N"/>
</dbReference>
<dbReference type="NCBIfam" id="TIGR00071">
    <property type="entry name" value="hisT_truA"/>
    <property type="match status" value="1"/>
</dbReference>
<dbReference type="PANTHER" id="PTHR11142">
    <property type="entry name" value="PSEUDOURIDYLATE SYNTHASE"/>
    <property type="match status" value="1"/>
</dbReference>
<dbReference type="PANTHER" id="PTHR11142:SF0">
    <property type="entry name" value="TRNA PSEUDOURIDINE SYNTHASE-LIKE 1"/>
    <property type="match status" value="1"/>
</dbReference>
<dbReference type="Pfam" id="PF01416">
    <property type="entry name" value="PseudoU_synth_1"/>
    <property type="match status" value="2"/>
</dbReference>
<dbReference type="PIRSF" id="PIRSF001430">
    <property type="entry name" value="tRNA_psdUrid_synth"/>
    <property type="match status" value="1"/>
</dbReference>
<dbReference type="SUPFAM" id="SSF55120">
    <property type="entry name" value="Pseudouridine synthase"/>
    <property type="match status" value="1"/>
</dbReference>
<accession>Q49ZD7</accession>
<protein>
    <recommendedName>
        <fullName evidence="1">tRNA pseudouridine synthase A</fullName>
        <ecNumber evidence="1">5.4.99.12</ecNumber>
    </recommendedName>
    <alternativeName>
        <fullName evidence="1">tRNA pseudouridine(38-40) synthase</fullName>
    </alternativeName>
    <alternativeName>
        <fullName evidence="1">tRNA pseudouridylate synthase I</fullName>
    </alternativeName>
    <alternativeName>
        <fullName evidence="1">tRNA-uridine isomerase I</fullName>
    </alternativeName>
</protein>
<gene>
    <name evidence="1" type="primary">truA</name>
    <name type="ordered locus">SSP0694</name>
</gene>
<reference key="1">
    <citation type="journal article" date="2005" name="Proc. Natl. Acad. Sci. U.S.A.">
        <title>Whole genome sequence of Staphylococcus saprophyticus reveals the pathogenesis of uncomplicated urinary tract infection.</title>
        <authorList>
            <person name="Kuroda M."/>
            <person name="Yamashita A."/>
            <person name="Hirakawa H."/>
            <person name="Kumano M."/>
            <person name="Morikawa K."/>
            <person name="Higashide M."/>
            <person name="Maruyama A."/>
            <person name="Inose Y."/>
            <person name="Matoba K."/>
            <person name="Toh H."/>
            <person name="Kuhara S."/>
            <person name="Hattori M."/>
            <person name="Ohta T."/>
        </authorList>
    </citation>
    <scope>NUCLEOTIDE SEQUENCE [LARGE SCALE GENOMIC DNA]</scope>
    <source>
        <strain>ATCC 15305 / DSM 20229 / NCIMB 8711 / NCTC 7292 / S-41</strain>
    </source>
</reference>
<evidence type="ECO:0000255" key="1">
    <source>
        <dbReference type="HAMAP-Rule" id="MF_00171"/>
    </source>
</evidence>